<proteinExistence type="inferred from homology"/>
<dbReference type="EC" id="3.6.5.3" evidence="2"/>
<dbReference type="EMBL" id="CP000976">
    <property type="protein sequence ID" value="ACH93420.1"/>
    <property type="molecule type" value="Genomic_DNA"/>
</dbReference>
<dbReference type="RefSeq" id="WP_012538231.1">
    <property type="nucleotide sequence ID" value="NC_011229.1"/>
</dbReference>
<dbReference type="SMR" id="B5RM34"/>
<dbReference type="STRING" id="412419.BDU_479"/>
<dbReference type="KEGG" id="bdu:BDU_479"/>
<dbReference type="eggNOG" id="COG0050">
    <property type="taxonomic scope" value="Bacteria"/>
</dbReference>
<dbReference type="HOGENOM" id="CLU_007265_0_0_12"/>
<dbReference type="OrthoDB" id="9804504at2"/>
<dbReference type="Proteomes" id="UP000000611">
    <property type="component" value="Chromosome"/>
</dbReference>
<dbReference type="GO" id="GO:0005737">
    <property type="term" value="C:cytoplasm"/>
    <property type="evidence" value="ECO:0007669"/>
    <property type="project" value="UniProtKB-SubCell"/>
</dbReference>
<dbReference type="GO" id="GO:0005525">
    <property type="term" value="F:GTP binding"/>
    <property type="evidence" value="ECO:0007669"/>
    <property type="project" value="UniProtKB-UniRule"/>
</dbReference>
<dbReference type="GO" id="GO:0003924">
    <property type="term" value="F:GTPase activity"/>
    <property type="evidence" value="ECO:0007669"/>
    <property type="project" value="InterPro"/>
</dbReference>
<dbReference type="GO" id="GO:0003746">
    <property type="term" value="F:translation elongation factor activity"/>
    <property type="evidence" value="ECO:0007669"/>
    <property type="project" value="UniProtKB-UniRule"/>
</dbReference>
<dbReference type="CDD" id="cd01884">
    <property type="entry name" value="EF_Tu"/>
    <property type="match status" value="1"/>
</dbReference>
<dbReference type="CDD" id="cd03697">
    <property type="entry name" value="EFTU_II"/>
    <property type="match status" value="1"/>
</dbReference>
<dbReference type="CDD" id="cd03707">
    <property type="entry name" value="EFTU_III"/>
    <property type="match status" value="1"/>
</dbReference>
<dbReference type="FunFam" id="2.40.30.10:FF:000001">
    <property type="entry name" value="Elongation factor Tu"/>
    <property type="match status" value="1"/>
</dbReference>
<dbReference type="FunFam" id="3.40.50.300:FF:000576">
    <property type="entry name" value="Elongation factor Tu"/>
    <property type="match status" value="1"/>
</dbReference>
<dbReference type="Gene3D" id="3.40.50.300">
    <property type="entry name" value="P-loop containing nucleotide triphosphate hydrolases"/>
    <property type="match status" value="1"/>
</dbReference>
<dbReference type="Gene3D" id="2.40.30.10">
    <property type="entry name" value="Translation factors"/>
    <property type="match status" value="2"/>
</dbReference>
<dbReference type="HAMAP" id="MF_00118_B">
    <property type="entry name" value="EF_Tu_B"/>
    <property type="match status" value="1"/>
</dbReference>
<dbReference type="InterPro" id="IPR041709">
    <property type="entry name" value="EF-Tu_GTP-bd"/>
</dbReference>
<dbReference type="InterPro" id="IPR050055">
    <property type="entry name" value="EF-Tu_GTPase"/>
</dbReference>
<dbReference type="InterPro" id="IPR004161">
    <property type="entry name" value="EFTu-like_2"/>
</dbReference>
<dbReference type="InterPro" id="IPR033720">
    <property type="entry name" value="EFTU_2"/>
</dbReference>
<dbReference type="InterPro" id="IPR031157">
    <property type="entry name" value="G_TR_CS"/>
</dbReference>
<dbReference type="InterPro" id="IPR027417">
    <property type="entry name" value="P-loop_NTPase"/>
</dbReference>
<dbReference type="InterPro" id="IPR005225">
    <property type="entry name" value="Small_GTP-bd"/>
</dbReference>
<dbReference type="InterPro" id="IPR000795">
    <property type="entry name" value="T_Tr_GTP-bd_dom"/>
</dbReference>
<dbReference type="InterPro" id="IPR009000">
    <property type="entry name" value="Transl_B-barrel_sf"/>
</dbReference>
<dbReference type="InterPro" id="IPR009001">
    <property type="entry name" value="Transl_elong_EF1A/Init_IF2_C"/>
</dbReference>
<dbReference type="InterPro" id="IPR004541">
    <property type="entry name" value="Transl_elong_EFTu/EF1A_bac/org"/>
</dbReference>
<dbReference type="InterPro" id="IPR004160">
    <property type="entry name" value="Transl_elong_EFTu/EF1A_C"/>
</dbReference>
<dbReference type="NCBIfam" id="TIGR00485">
    <property type="entry name" value="EF-Tu"/>
    <property type="match status" value="1"/>
</dbReference>
<dbReference type="NCBIfam" id="NF000766">
    <property type="entry name" value="PRK00049.1"/>
    <property type="match status" value="1"/>
</dbReference>
<dbReference type="NCBIfam" id="NF009372">
    <property type="entry name" value="PRK12735.1"/>
    <property type="match status" value="1"/>
</dbReference>
<dbReference type="NCBIfam" id="NF009373">
    <property type="entry name" value="PRK12736.1"/>
    <property type="match status" value="1"/>
</dbReference>
<dbReference type="NCBIfam" id="TIGR00231">
    <property type="entry name" value="small_GTP"/>
    <property type="match status" value="1"/>
</dbReference>
<dbReference type="PANTHER" id="PTHR43721:SF22">
    <property type="entry name" value="ELONGATION FACTOR TU, MITOCHONDRIAL"/>
    <property type="match status" value="1"/>
</dbReference>
<dbReference type="PANTHER" id="PTHR43721">
    <property type="entry name" value="ELONGATION FACTOR TU-RELATED"/>
    <property type="match status" value="1"/>
</dbReference>
<dbReference type="Pfam" id="PF00009">
    <property type="entry name" value="GTP_EFTU"/>
    <property type="match status" value="1"/>
</dbReference>
<dbReference type="Pfam" id="PF03144">
    <property type="entry name" value="GTP_EFTU_D2"/>
    <property type="match status" value="1"/>
</dbReference>
<dbReference type="Pfam" id="PF03143">
    <property type="entry name" value="GTP_EFTU_D3"/>
    <property type="match status" value="1"/>
</dbReference>
<dbReference type="PRINTS" id="PR00315">
    <property type="entry name" value="ELONGATNFCT"/>
</dbReference>
<dbReference type="SUPFAM" id="SSF50465">
    <property type="entry name" value="EF-Tu/eEF-1alpha/eIF2-gamma C-terminal domain"/>
    <property type="match status" value="1"/>
</dbReference>
<dbReference type="SUPFAM" id="SSF52540">
    <property type="entry name" value="P-loop containing nucleoside triphosphate hydrolases"/>
    <property type="match status" value="1"/>
</dbReference>
<dbReference type="SUPFAM" id="SSF50447">
    <property type="entry name" value="Translation proteins"/>
    <property type="match status" value="1"/>
</dbReference>
<dbReference type="PROSITE" id="PS00301">
    <property type="entry name" value="G_TR_1"/>
    <property type="match status" value="1"/>
</dbReference>
<dbReference type="PROSITE" id="PS51722">
    <property type="entry name" value="G_TR_2"/>
    <property type="match status" value="1"/>
</dbReference>
<name>EFTU_BORDL</name>
<organism>
    <name type="scientific">Borrelia duttonii (strain Ly)</name>
    <dbReference type="NCBI Taxonomy" id="412419"/>
    <lineage>
        <taxon>Bacteria</taxon>
        <taxon>Pseudomonadati</taxon>
        <taxon>Spirochaetota</taxon>
        <taxon>Spirochaetia</taxon>
        <taxon>Spirochaetales</taxon>
        <taxon>Borreliaceae</taxon>
        <taxon>Borrelia</taxon>
    </lineage>
</organism>
<keyword id="KW-0963">Cytoplasm</keyword>
<keyword id="KW-0251">Elongation factor</keyword>
<keyword id="KW-0342">GTP-binding</keyword>
<keyword id="KW-0378">Hydrolase</keyword>
<keyword id="KW-0460">Magnesium</keyword>
<keyword id="KW-0479">Metal-binding</keyword>
<keyword id="KW-0547">Nucleotide-binding</keyword>
<keyword id="KW-0648">Protein biosynthesis</keyword>
<sequence length="394" mass="43462">MAKEIFQRTKPHMNVGTIGHVDHGKTTLTAAISIYCSKVNKDAKALKYEDIDNAPEEKARGITINARHIEYETANRHYAHVDCPGHADYIKNMITGAAQMDAAILLVAADSGAEPQTKEHLLLAQRMGIKKIIVFLNKLDLADPELVELVEVEVLELVEKYGFPSDTPIVKGSAFGAMSNPDDPEATKCIKELLETMDNYFDLPERDIDKPFLLAIEDVFSISGRGTVATGRIERGVIKVGQEVEIVGIRETRKTTVTGVEMFQKILEQGEAGDNVGLLLRGVDKKDIERGQVIAALGTITPHKKFKASIYCLTKEEGGRHKPFFSGYRPQFFFRTTDVTGMVSLEGKEMVMPGDNVDIVVELISSIAMDKNVEFAVREGGRTVASGRILEILE</sequence>
<reference key="1">
    <citation type="journal article" date="2008" name="PLoS Genet.">
        <title>The genome of Borrelia recurrentis, the agent of deadly louse-borne relapsing fever, is a degraded subset of tick-borne Borrelia duttonii.</title>
        <authorList>
            <person name="Lescot M."/>
            <person name="Audic S."/>
            <person name="Robert C."/>
            <person name="Nguyen T.T."/>
            <person name="Blanc G."/>
            <person name="Cutler S.J."/>
            <person name="Wincker P."/>
            <person name="Couloux A."/>
            <person name="Claverie J.-M."/>
            <person name="Raoult D."/>
            <person name="Drancourt M."/>
        </authorList>
    </citation>
    <scope>NUCLEOTIDE SEQUENCE [LARGE SCALE GENOMIC DNA]</scope>
    <source>
        <strain>Ly</strain>
    </source>
</reference>
<protein>
    <recommendedName>
        <fullName evidence="2">Elongation factor Tu</fullName>
        <shortName evidence="2">EF-Tu</shortName>
        <ecNumber evidence="2">3.6.5.3</ecNumber>
    </recommendedName>
</protein>
<evidence type="ECO:0000250" key="1"/>
<evidence type="ECO:0000255" key="2">
    <source>
        <dbReference type="HAMAP-Rule" id="MF_00118"/>
    </source>
</evidence>
<gene>
    <name evidence="2" type="primary">tuf</name>
    <name type="ordered locus">BDU_479</name>
</gene>
<accession>B5RM34</accession>
<feature type="chain" id="PRO_1000095051" description="Elongation factor Tu">
    <location>
        <begin position="1"/>
        <end position="394"/>
    </location>
</feature>
<feature type="domain" description="tr-type G">
    <location>
        <begin position="10"/>
        <end position="205"/>
    </location>
</feature>
<feature type="region of interest" description="G1" evidence="1">
    <location>
        <begin position="19"/>
        <end position="26"/>
    </location>
</feature>
<feature type="region of interest" description="G2" evidence="1">
    <location>
        <begin position="61"/>
        <end position="65"/>
    </location>
</feature>
<feature type="region of interest" description="G3" evidence="1">
    <location>
        <begin position="82"/>
        <end position="85"/>
    </location>
</feature>
<feature type="region of interest" description="G4" evidence="1">
    <location>
        <begin position="137"/>
        <end position="140"/>
    </location>
</feature>
<feature type="region of interest" description="G5" evidence="1">
    <location>
        <begin position="173"/>
        <end position="175"/>
    </location>
</feature>
<feature type="binding site" evidence="2">
    <location>
        <begin position="19"/>
        <end position="26"/>
    </location>
    <ligand>
        <name>GTP</name>
        <dbReference type="ChEBI" id="CHEBI:37565"/>
    </ligand>
</feature>
<feature type="binding site" evidence="2">
    <location>
        <position position="26"/>
    </location>
    <ligand>
        <name>Mg(2+)</name>
        <dbReference type="ChEBI" id="CHEBI:18420"/>
    </ligand>
</feature>
<feature type="binding site" evidence="2">
    <location>
        <begin position="82"/>
        <end position="86"/>
    </location>
    <ligand>
        <name>GTP</name>
        <dbReference type="ChEBI" id="CHEBI:37565"/>
    </ligand>
</feature>
<feature type="binding site" evidence="2">
    <location>
        <begin position="137"/>
        <end position="140"/>
    </location>
    <ligand>
        <name>GTP</name>
        <dbReference type="ChEBI" id="CHEBI:37565"/>
    </ligand>
</feature>
<comment type="function">
    <text evidence="2">GTP hydrolase that promotes the GTP-dependent binding of aminoacyl-tRNA to the A-site of ribosomes during protein biosynthesis.</text>
</comment>
<comment type="catalytic activity">
    <reaction evidence="2">
        <text>GTP + H2O = GDP + phosphate + H(+)</text>
        <dbReference type="Rhea" id="RHEA:19669"/>
        <dbReference type="ChEBI" id="CHEBI:15377"/>
        <dbReference type="ChEBI" id="CHEBI:15378"/>
        <dbReference type="ChEBI" id="CHEBI:37565"/>
        <dbReference type="ChEBI" id="CHEBI:43474"/>
        <dbReference type="ChEBI" id="CHEBI:58189"/>
        <dbReference type="EC" id="3.6.5.3"/>
    </reaction>
    <physiologicalReaction direction="left-to-right" evidence="2">
        <dbReference type="Rhea" id="RHEA:19670"/>
    </physiologicalReaction>
</comment>
<comment type="subunit">
    <text evidence="2">Monomer.</text>
</comment>
<comment type="subcellular location">
    <subcellularLocation>
        <location evidence="2">Cytoplasm</location>
    </subcellularLocation>
</comment>
<comment type="similarity">
    <text evidence="2">Belongs to the TRAFAC class translation factor GTPase superfamily. Classic translation factor GTPase family. EF-Tu/EF-1A subfamily.</text>
</comment>